<proteinExistence type="predicted"/>
<accession>O28399</accession>
<protein>
    <recommendedName>
        <fullName>Uncharacterized protein AF_1880</fullName>
    </recommendedName>
</protein>
<organism>
    <name type="scientific">Archaeoglobus fulgidus (strain ATCC 49558 / DSM 4304 / JCM 9628 / NBRC 100126 / VC-16)</name>
    <dbReference type="NCBI Taxonomy" id="224325"/>
    <lineage>
        <taxon>Archaea</taxon>
        <taxon>Methanobacteriati</taxon>
        <taxon>Methanobacteriota</taxon>
        <taxon>Archaeoglobi</taxon>
        <taxon>Archaeoglobales</taxon>
        <taxon>Archaeoglobaceae</taxon>
        <taxon>Archaeoglobus</taxon>
    </lineage>
</organism>
<keyword id="KW-1185">Reference proteome</keyword>
<gene>
    <name type="ordered locus">AF_1880</name>
</gene>
<name>Y1880_ARCFU</name>
<dbReference type="EMBL" id="AE000782">
    <property type="protein sequence ID" value="AAB89386.1"/>
    <property type="molecule type" value="Genomic_DNA"/>
</dbReference>
<dbReference type="PIR" id="G69484">
    <property type="entry name" value="G69484"/>
</dbReference>
<dbReference type="PaxDb" id="224325-AF_1880"/>
<dbReference type="EnsemblBacteria" id="AAB89386">
    <property type="protein sequence ID" value="AAB89386"/>
    <property type="gene ID" value="AF_1880"/>
</dbReference>
<dbReference type="KEGG" id="afu:AF_1880"/>
<dbReference type="HOGENOM" id="CLU_3263591_0_0_2"/>
<dbReference type="Proteomes" id="UP000002199">
    <property type="component" value="Chromosome"/>
</dbReference>
<reference key="1">
    <citation type="journal article" date="1997" name="Nature">
        <title>The complete genome sequence of the hyperthermophilic, sulphate-reducing archaeon Archaeoglobus fulgidus.</title>
        <authorList>
            <person name="Klenk H.-P."/>
            <person name="Clayton R.A."/>
            <person name="Tomb J.-F."/>
            <person name="White O."/>
            <person name="Nelson K.E."/>
            <person name="Ketchum K.A."/>
            <person name="Dodson R.J."/>
            <person name="Gwinn M.L."/>
            <person name="Hickey E.K."/>
            <person name="Peterson J.D."/>
            <person name="Richardson D.L."/>
            <person name="Kerlavage A.R."/>
            <person name="Graham D.E."/>
            <person name="Kyrpides N.C."/>
            <person name="Fleischmann R.D."/>
            <person name="Quackenbush J."/>
            <person name="Lee N.H."/>
            <person name="Sutton G.G."/>
            <person name="Gill S.R."/>
            <person name="Kirkness E.F."/>
            <person name="Dougherty B.A."/>
            <person name="McKenney K."/>
            <person name="Adams M.D."/>
            <person name="Loftus B.J."/>
            <person name="Peterson S.N."/>
            <person name="Reich C.I."/>
            <person name="McNeil L.K."/>
            <person name="Badger J.H."/>
            <person name="Glodek A."/>
            <person name="Zhou L."/>
            <person name="Overbeek R."/>
            <person name="Gocayne J.D."/>
            <person name="Weidman J.F."/>
            <person name="McDonald L.A."/>
            <person name="Utterback T.R."/>
            <person name="Cotton M.D."/>
            <person name="Spriggs T."/>
            <person name="Artiach P."/>
            <person name="Kaine B.P."/>
            <person name="Sykes S.M."/>
            <person name="Sadow P.W."/>
            <person name="D'Andrea K.P."/>
            <person name="Bowman C."/>
            <person name="Fujii C."/>
            <person name="Garland S.A."/>
            <person name="Mason T.M."/>
            <person name="Olsen G.J."/>
            <person name="Fraser C.M."/>
            <person name="Smith H.O."/>
            <person name="Woese C.R."/>
            <person name="Venter J.C."/>
        </authorList>
    </citation>
    <scope>NUCLEOTIDE SEQUENCE [LARGE SCALE GENOMIC DNA]</scope>
    <source>
        <strain>ATCC 49558 / DSM 4304 / JCM 9628 / NBRC 100126 / VC-16</strain>
    </source>
</reference>
<feature type="chain" id="PRO_0000128071" description="Uncharacterized protein AF_1880">
    <location>
        <begin position="1"/>
        <end position="41"/>
    </location>
</feature>
<sequence>MFMPASKPDLGKKGRLLKMEIESLDYFAAICTDYFVRKGGS</sequence>